<accession>Q0J185</accession>
<accession>A0A0P0XNJ5</accession>
<accession>Q67TP6</accession>
<evidence type="ECO:0000250" key="1"/>
<evidence type="ECO:0000250" key="2">
    <source>
        <dbReference type="UniProtKB" id="Q949P1"/>
    </source>
</evidence>
<evidence type="ECO:0000255" key="3"/>
<evidence type="ECO:0000305" key="4"/>
<keyword id="KW-0349">Heme</keyword>
<keyword id="KW-0408">Iron</keyword>
<keyword id="KW-0472">Membrane</keyword>
<keyword id="KW-0479">Metal-binding</keyword>
<keyword id="KW-0503">Monooxygenase</keyword>
<keyword id="KW-0560">Oxidoreductase</keyword>
<keyword id="KW-1185">Reference proteome</keyword>
<keyword id="KW-0812">Transmembrane</keyword>
<keyword id="KW-1133">Transmembrane helix</keyword>
<name>ABAH3_ORYSJ</name>
<feature type="chain" id="PRO_0000288648" description="Abscisic acid 8'-hydroxylase 3">
    <location>
        <begin position="1"/>
        <end position="500"/>
    </location>
</feature>
<feature type="transmembrane region" description="Helical" evidence="3">
    <location>
        <begin position="3"/>
        <end position="23"/>
    </location>
</feature>
<feature type="binding site" description="axial binding residue" evidence="1">
    <location>
        <position position="426"/>
    </location>
    <ligand>
        <name>heme</name>
        <dbReference type="ChEBI" id="CHEBI:30413"/>
    </ligand>
    <ligandPart>
        <name>Fe</name>
        <dbReference type="ChEBI" id="CHEBI:18248"/>
    </ligandPart>
</feature>
<protein>
    <recommendedName>
        <fullName>Abscisic acid 8'-hydroxylase 3</fullName>
        <shortName>ABA 8'-hydroxylase 3</shortName>
        <ecNumber evidence="2">1.14.14.137</ecNumber>
    </recommendedName>
    <alternativeName>
        <fullName>Cytochrome P450 707A7</fullName>
    </alternativeName>
    <alternativeName>
        <fullName>OsABA8ox3</fullName>
    </alternativeName>
</protein>
<sequence length="500" mass="56167">MAASFVIVIVISFFISLAFMCYVHYTSRQRRKLHGYGHEKAVRLPPGSMGWPYIGETLQLYSQDPNVFFASKQKRYGEIFKTHILGCPCVMLASPEAARFVLVTQAHLFKPTYPRSKERMIGPSALFFHQGDYHLRLRKLVQGPLGPDALRALVPDVEAAVRSTLASWDGNVSSTFHAMKRLSFDVGIVTIFGGRLDERRKAELRQNYAIVEKGYNSFPNSFPGTLYYKAIQARRRLHGVLSDIMRERRARGEPGSDLLGCLMQSRAGDDGALLTDEQVADNIIGVLFAAQDTTASVLTWIVKYLHDHPKLLEAVRAEQAAIRAANDGGRLPLTWAQTRSMALTHKVILESLRMASIISFTFREAVADVEYKGFLIPKGWKVMPLFRNIHHNPDYFQDPQKFDPSRFKVSPRPNTFMPFGNGVHACPGNELAKLEMLVLIHHLVTGYRWEIVGSSDEVEYSPFPVPKHGLLAKLWRDDSVSVETDGCQNGDNDDNGVAMV</sequence>
<reference key="1">
    <citation type="journal article" date="2005" name="Nature">
        <title>The map-based sequence of the rice genome.</title>
        <authorList>
            <consortium name="International rice genome sequencing project (IRGSP)"/>
        </authorList>
    </citation>
    <scope>NUCLEOTIDE SEQUENCE [LARGE SCALE GENOMIC DNA]</scope>
    <source>
        <strain>cv. Nipponbare</strain>
    </source>
</reference>
<reference key="2">
    <citation type="journal article" date="2008" name="Nucleic Acids Res.">
        <title>The rice annotation project database (RAP-DB): 2008 update.</title>
        <authorList>
            <consortium name="The rice annotation project (RAP)"/>
        </authorList>
    </citation>
    <scope>GENOME REANNOTATION</scope>
    <source>
        <strain>cv. Nipponbare</strain>
    </source>
</reference>
<reference key="3">
    <citation type="journal article" date="2013" name="Rice">
        <title>Improvement of the Oryza sativa Nipponbare reference genome using next generation sequence and optical map data.</title>
        <authorList>
            <person name="Kawahara Y."/>
            <person name="de la Bastide M."/>
            <person name="Hamilton J.P."/>
            <person name="Kanamori H."/>
            <person name="McCombie W.R."/>
            <person name="Ouyang S."/>
            <person name="Schwartz D.C."/>
            <person name="Tanaka T."/>
            <person name="Wu J."/>
            <person name="Zhou S."/>
            <person name="Childs K.L."/>
            <person name="Davidson R.M."/>
            <person name="Lin H."/>
            <person name="Quesada-Ocampo L."/>
            <person name="Vaillancourt B."/>
            <person name="Sakai H."/>
            <person name="Lee S.S."/>
            <person name="Kim J."/>
            <person name="Numa H."/>
            <person name="Itoh T."/>
            <person name="Buell C.R."/>
            <person name="Matsumoto T."/>
        </authorList>
    </citation>
    <scope>GENOME REANNOTATION</scope>
    <source>
        <strain>cv. Nipponbare</strain>
    </source>
</reference>
<reference key="4">
    <citation type="journal article" date="2005" name="PLoS Biol.">
        <title>The genomes of Oryza sativa: a history of duplications.</title>
        <authorList>
            <person name="Yu J."/>
            <person name="Wang J."/>
            <person name="Lin W."/>
            <person name="Li S."/>
            <person name="Li H."/>
            <person name="Zhou J."/>
            <person name="Ni P."/>
            <person name="Dong W."/>
            <person name="Hu S."/>
            <person name="Zeng C."/>
            <person name="Zhang J."/>
            <person name="Zhang Y."/>
            <person name="Li R."/>
            <person name="Xu Z."/>
            <person name="Li S."/>
            <person name="Li X."/>
            <person name="Zheng H."/>
            <person name="Cong L."/>
            <person name="Lin L."/>
            <person name="Yin J."/>
            <person name="Geng J."/>
            <person name="Li G."/>
            <person name="Shi J."/>
            <person name="Liu J."/>
            <person name="Lv H."/>
            <person name="Li J."/>
            <person name="Wang J."/>
            <person name="Deng Y."/>
            <person name="Ran L."/>
            <person name="Shi X."/>
            <person name="Wang X."/>
            <person name="Wu Q."/>
            <person name="Li C."/>
            <person name="Ren X."/>
            <person name="Wang J."/>
            <person name="Wang X."/>
            <person name="Li D."/>
            <person name="Liu D."/>
            <person name="Zhang X."/>
            <person name="Ji Z."/>
            <person name="Zhao W."/>
            <person name="Sun Y."/>
            <person name="Zhang Z."/>
            <person name="Bao J."/>
            <person name="Han Y."/>
            <person name="Dong L."/>
            <person name="Ji J."/>
            <person name="Chen P."/>
            <person name="Wu S."/>
            <person name="Liu J."/>
            <person name="Xiao Y."/>
            <person name="Bu D."/>
            <person name="Tan J."/>
            <person name="Yang L."/>
            <person name="Ye C."/>
            <person name="Zhang J."/>
            <person name="Xu J."/>
            <person name="Zhou Y."/>
            <person name="Yu Y."/>
            <person name="Zhang B."/>
            <person name="Zhuang S."/>
            <person name="Wei H."/>
            <person name="Liu B."/>
            <person name="Lei M."/>
            <person name="Yu H."/>
            <person name="Li Y."/>
            <person name="Xu H."/>
            <person name="Wei S."/>
            <person name="He X."/>
            <person name="Fang L."/>
            <person name="Zhang Z."/>
            <person name="Zhang Y."/>
            <person name="Huang X."/>
            <person name="Su Z."/>
            <person name="Tong W."/>
            <person name="Li J."/>
            <person name="Tong Z."/>
            <person name="Li S."/>
            <person name="Ye J."/>
            <person name="Wang L."/>
            <person name="Fang L."/>
            <person name="Lei T."/>
            <person name="Chen C.-S."/>
            <person name="Chen H.-C."/>
            <person name="Xu Z."/>
            <person name="Li H."/>
            <person name="Huang H."/>
            <person name="Zhang F."/>
            <person name="Xu H."/>
            <person name="Li N."/>
            <person name="Zhao C."/>
            <person name="Li S."/>
            <person name="Dong L."/>
            <person name="Huang Y."/>
            <person name="Li L."/>
            <person name="Xi Y."/>
            <person name="Qi Q."/>
            <person name="Li W."/>
            <person name="Zhang B."/>
            <person name="Hu W."/>
            <person name="Zhang Y."/>
            <person name="Tian X."/>
            <person name="Jiao Y."/>
            <person name="Liang X."/>
            <person name="Jin J."/>
            <person name="Gao L."/>
            <person name="Zheng W."/>
            <person name="Hao B."/>
            <person name="Liu S.-M."/>
            <person name="Wang W."/>
            <person name="Yuan L."/>
            <person name="Cao M."/>
            <person name="McDermott J."/>
            <person name="Samudrala R."/>
            <person name="Wang J."/>
            <person name="Wong G.K.-S."/>
            <person name="Yang H."/>
        </authorList>
    </citation>
    <scope>NUCLEOTIDE SEQUENCE [LARGE SCALE GENOMIC DNA]</scope>
    <source>
        <strain>cv. Nipponbare</strain>
    </source>
</reference>
<reference key="5">
    <citation type="journal article" date="2007" name="Plant Cell Physiol.">
        <title>Ethylene promotes submergence-induced expression of OsABA8ox1, a gene that encodes ABA 8'-hydroxylase in rice.</title>
        <authorList>
            <person name="Saika H."/>
            <person name="Okamoto M."/>
            <person name="Miyoshi K."/>
            <person name="Kushiro T."/>
            <person name="Shinoda S."/>
            <person name="Jikumaru Y."/>
            <person name="Fujimoto M."/>
            <person name="Arikawa T."/>
            <person name="Takahashi H."/>
            <person name="Ando M."/>
            <person name="Arimura S."/>
            <person name="Miyao A."/>
            <person name="Hirochika H."/>
            <person name="Kamiya Y."/>
            <person name="Tsutsumi N."/>
            <person name="Nambara E."/>
            <person name="Nakazono M."/>
        </authorList>
    </citation>
    <scope>IDENTIFICATION</scope>
    <scope>LACK OF INDUCTION</scope>
</reference>
<comment type="function">
    <text evidence="1">Involved in the oxidative degradation of abscisic acid.</text>
</comment>
<comment type="catalytic activity">
    <reaction evidence="2">
        <text>2-cis-(+)-abscisate + reduced [NADPH--hemoprotein reductase] + O2 = (+)-8'-hydroxyabscisate + oxidized [NADPH--hemoprotein reductase] + H2O + H(+)</text>
        <dbReference type="Rhea" id="RHEA:12897"/>
        <dbReference type="Rhea" id="RHEA-COMP:11964"/>
        <dbReference type="Rhea" id="RHEA-COMP:11965"/>
        <dbReference type="ChEBI" id="CHEBI:15377"/>
        <dbReference type="ChEBI" id="CHEBI:15378"/>
        <dbReference type="ChEBI" id="CHEBI:15379"/>
        <dbReference type="ChEBI" id="CHEBI:37569"/>
        <dbReference type="ChEBI" id="CHEBI:57618"/>
        <dbReference type="ChEBI" id="CHEBI:58210"/>
        <dbReference type="ChEBI" id="CHEBI:58490"/>
        <dbReference type="EC" id="1.14.14.137"/>
    </reaction>
</comment>
<comment type="cofactor">
    <cofactor evidence="1">
        <name>heme</name>
        <dbReference type="ChEBI" id="CHEBI:30413"/>
    </cofactor>
</comment>
<comment type="pathway">
    <text>Plant hormone degradation; abscisic acid degradation.</text>
</comment>
<comment type="subcellular location">
    <subcellularLocation>
        <location evidence="4">Membrane</location>
        <topology evidence="4">Single-pass membrane protein</topology>
    </subcellularLocation>
</comment>
<comment type="induction">
    <text>Not induced by ethylene treatment or flooding.</text>
</comment>
<comment type="similarity">
    <text evidence="4">Belongs to the cytochrome P450 family.</text>
</comment>
<comment type="sequence caution" evidence="4">
    <conflict type="erroneous gene model prediction">
        <sequence resource="EMBL-CDS" id="BAD38475"/>
    </conflict>
</comment>
<organism>
    <name type="scientific">Oryza sativa subsp. japonica</name>
    <name type="common">Rice</name>
    <dbReference type="NCBI Taxonomy" id="39947"/>
    <lineage>
        <taxon>Eukaryota</taxon>
        <taxon>Viridiplantae</taxon>
        <taxon>Streptophyta</taxon>
        <taxon>Embryophyta</taxon>
        <taxon>Tracheophyta</taxon>
        <taxon>Spermatophyta</taxon>
        <taxon>Magnoliopsida</taxon>
        <taxon>Liliopsida</taxon>
        <taxon>Poales</taxon>
        <taxon>Poaceae</taxon>
        <taxon>BOP clade</taxon>
        <taxon>Oryzoideae</taxon>
        <taxon>Oryzeae</taxon>
        <taxon>Oryzinae</taxon>
        <taxon>Oryza</taxon>
        <taxon>Oryza sativa</taxon>
    </lineage>
</organism>
<proteinExistence type="evidence at transcript level"/>
<dbReference type="EC" id="1.14.14.137" evidence="2"/>
<dbReference type="EMBL" id="AP006057">
    <property type="protein sequence ID" value="BAD38475.1"/>
    <property type="status" value="ALT_SEQ"/>
    <property type="molecule type" value="Genomic_DNA"/>
</dbReference>
<dbReference type="EMBL" id="AP008215">
    <property type="protein sequence ID" value="BAF25280.1"/>
    <property type="molecule type" value="Genomic_DNA"/>
</dbReference>
<dbReference type="EMBL" id="AP014965">
    <property type="protein sequence ID" value="BAT08439.1"/>
    <property type="molecule type" value="Genomic_DNA"/>
</dbReference>
<dbReference type="EMBL" id="CM000146">
    <property type="protein sequence ID" value="EAZ44986.1"/>
    <property type="molecule type" value="Genomic_DNA"/>
</dbReference>
<dbReference type="RefSeq" id="XP_015610835.1">
    <property type="nucleotide sequence ID" value="XM_015755349.1"/>
</dbReference>
<dbReference type="SMR" id="Q0J185"/>
<dbReference type="FunCoup" id="Q0J185">
    <property type="interactions" value="429"/>
</dbReference>
<dbReference type="STRING" id="39947.Q0J185"/>
<dbReference type="PaxDb" id="39947-Q0J185"/>
<dbReference type="EnsemblPlants" id="Os09t0457100-01">
    <property type="protein sequence ID" value="Os09t0457100-01"/>
    <property type="gene ID" value="Os09g0457100"/>
</dbReference>
<dbReference type="Gramene" id="Os09t0457100-01">
    <property type="protein sequence ID" value="Os09t0457100-01"/>
    <property type="gene ID" value="Os09g0457100"/>
</dbReference>
<dbReference type="KEGG" id="dosa:Os09g0457100"/>
<dbReference type="eggNOG" id="KOG0157">
    <property type="taxonomic scope" value="Eukaryota"/>
</dbReference>
<dbReference type="HOGENOM" id="CLU_001570_15_5_1"/>
<dbReference type="InParanoid" id="Q0J185"/>
<dbReference type="OMA" id="TPPFHGK"/>
<dbReference type="OrthoDB" id="1372046at2759"/>
<dbReference type="BRENDA" id="1.14.14.137">
    <property type="organism ID" value="4460"/>
</dbReference>
<dbReference type="PlantReactome" id="R-OSA-1119609">
    <property type="pathway name" value="Phaseic acid biosynthesis"/>
</dbReference>
<dbReference type="UniPathway" id="UPA00093"/>
<dbReference type="Proteomes" id="UP000000763">
    <property type="component" value="Chromosome 9"/>
</dbReference>
<dbReference type="Proteomes" id="UP000007752">
    <property type="component" value="Chromosome 9"/>
</dbReference>
<dbReference type="Proteomes" id="UP000059680">
    <property type="component" value="Chromosome 9"/>
</dbReference>
<dbReference type="GO" id="GO:0016020">
    <property type="term" value="C:membrane"/>
    <property type="evidence" value="ECO:0007669"/>
    <property type="project" value="UniProtKB-SubCell"/>
</dbReference>
<dbReference type="GO" id="GO:0010295">
    <property type="term" value="F:(+)-abscisic acid 8'-hydroxylase activity"/>
    <property type="evidence" value="ECO:0000318"/>
    <property type="project" value="GO_Central"/>
</dbReference>
<dbReference type="GO" id="GO:0020037">
    <property type="term" value="F:heme binding"/>
    <property type="evidence" value="ECO:0007669"/>
    <property type="project" value="InterPro"/>
</dbReference>
<dbReference type="GO" id="GO:0005506">
    <property type="term" value="F:iron ion binding"/>
    <property type="evidence" value="ECO:0007669"/>
    <property type="project" value="InterPro"/>
</dbReference>
<dbReference type="GO" id="GO:0046345">
    <property type="term" value="P:abscisic acid catabolic process"/>
    <property type="evidence" value="ECO:0007669"/>
    <property type="project" value="UniProtKB-UniPathway"/>
</dbReference>
<dbReference type="CDD" id="cd11043">
    <property type="entry name" value="CYP90-like"/>
    <property type="match status" value="1"/>
</dbReference>
<dbReference type="FunFam" id="1.10.630.10:FF:000014">
    <property type="entry name" value="Abscisic acid 8"/>
    <property type="match status" value="1"/>
</dbReference>
<dbReference type="Gene3D" id="1.10.630.10">
    <property type="entry name" value="Cytochrome P450"/>
    <property type="match status" value="1"/>
</dbReference>
<dbReference type="InterPro" id="IPR001128">
    <property type="entry name" value="Cyt_P450"/>
</dbReference>
<dbReference type="InterPro" id="IPR017972">
    <property type="entry name" value="Cyt_P450_CS"/>
</dbReference>
<dbReference type="InterPro" id="IPR002401">
    <property type="entry name" value="Cyt_P450_E_grp-I"/>
</dbReference>
<dbReference type="InterPro" id="IPR036396">
    <property type="entry name" value="Cyt_P450_sf"/>
</dbReference>
<dbReference type="PANTHER" id="PTHR24286:SF376">
    <property type="entry name" value="ABSCISIC ACID 8'-HYDROXYLASE 4"/>
    <property type="match status" value="1"/>
</dbReference>
<dbReference type="PANTHER" id="PTHR24286">
    <property type="entry name" value="CYTOCHROME P450 26"/>
    <property type="match status" value="1"/>
</dbReference>
<dbReference type="Pfam" id="PF00067">
    <property type="entry name" value="p450"/>
    <property type="match status" value="1"/>
</dbReference>
<dbReference type="PRINTS" id="PR00463">
    <property type="entry name" value="EP450I"/>
</dbReference>
<dbReference type="PRINTS" id="PR00385">
    <property type="entry name" value="P450"/>
</dbReference>
<dbReference type="SUPFAM" id="SSF48264">
    <property type="entry name" value="Cytochrome P450"/>
    <property type="match status" value="1"/>
</dbReference>
<dbReference type="PROSITE" id="PS00086">
    <property type="entry name" value="CYTOCHROME_P450"/>
    <property type="match status" value="1"/>
</dbReference>
<gene>
    <name type="primary">CYP707A7</name>
    <name type="synonym">ABA8OX3</name>
    <name type="ordered locus">Os09g0457100</name>
    <name type="ordered locus">LOC_Os09g28390</name>
    <name type="ORF">B1342C04.43</name>
    <name type="ORF">OsJ_028469</name>
</gene>